<organism>
    <name type="scientific">Nostoc sp. (strain MUN 8820)</name>
    <dbReference type="NCBI Taxonomy" id="55397"/>
    <lineage>
        <taxon>Bacteria</taxon>
        <taxon>Bacillati</taxon>
        <taxon>Cyanobacteriota</taxon>
        <taxon>Cyanophyceae</taxon>
        <taxon>Nostocales</taxon>
        <taxon>Nostocaceae</taxon>
        <taxon>Nostoc</taxon>
    </lineage>
</organism>
<evidence type="ECO:0000250" key="1"/>
<evidence type="ECO:0000255" key="2"/>
<evidence type="ECO:0000305" key="3"/>
<keyword id="KW-0349">Heme</keyword>
<keyword id="KW-0408">Iron</keyword>
<keyword id="KW-0472">Membrane</keyword>
<keyword id="KW-0479">Metal-binding</keyword>
<keyword id="KW-0561">Oxygen transport</keyword>
<keyword id="KW-0813">Transport</keyword>
<gene>
    <name type="primary">glbN</name>
</gene>
<reference key="1">
    <citation type="journal article" date="1996" name="J. Bacteriol.">
        <title>GlbN (cyanoglobin) is a peripheral membrane protein that is restricted to certain Nostoc spp.</title>
        <authorList>
            <person name="Hill D.R."/>
            <person name="Belbin T.J."/>
            <person name="Thorsteinsson M.V."/>
            <person name="Bassam D."/>
            <person name="Brass S."/>
            <person name="Ernst A."/>
            <person name="Boger P."/>
            <person name="Paerl H."/>
            <person name="Mulligan M.E."/>
            <person name="Potts M."/>
        </authorList>
    </citation>
    <scope>NUCLEOTIDE SEQUENCE [GENOMIC DNA]</scope>
</reference>
<protein>
    <recommendedName>
        <fullName>Group 1 truncated hemoglobin GlbN</fullName>
        <shortName>Truncated Hb</shortName>
    </recommendedName>
    <alternativeName>
        <fullName>Cyanoglobin</fullName>
    </alternativeName>
</protein>
<name>TRHBN_NOSSN</name>
<proteinExistence type="inferred from homology"/>
<dbReference type="EMBL" id="L47979">
    <property type="protein sequence ID" value="AAB41122.1"/>
    <property type="molecule type" value="Genomic_DNA"/>
</dbReference>
<dbReference type="SMR" id="P52335"/>
<dbReference type="GO" id="GO:0016020">
    <property type="term" value="C:membrane"/>
    <property type="evidence" value="ECO:0007669"/>
    <property type="project" value="UniProtKB-SubCell"/>
</dbReference>
<dbReference type="GO" id="GO:0020037">
    <property type="term" value="F:heme binding"/>
    <property type="evidence" value="ECO:0007669"/>
    <property type="project" value="InterPro"/>
</dbReference>
<dbReference type="GO" id="GO:0046872">
    <property type="term" value="F:metal ion binding"/>
    <property type="evidence" value="ECO:0007669"/>
    <property type="project" value="UniProtKB-KW"/>
</dbReference>
<dbReference type="GO" id="GO:0019825">
    <property type="term" value="F:oxygen binding"/>
    <property type="evidence" value="ECO:0007669"/>
    <property type="project" value="InterPro"/>
</dbReference>
<dbReference type="GO" id="GO:0005344">
    <property type="term" value="F:oxygen carrier activity"/>
    <property type="evidence" value="ECO:0007669"/>
    <property type="project" value="UniProtKB-KW"/>
</dbReference>
<dbReference type="CDD" id="cd00454">
    <property type="entry name" value="TrHb1_N"/>
    <property type="match status" value="1"/>
</dbReference>
<dbReference type="Gene3D" id="1.10.490.10">
    <property type="entry name" value="Globins"/>
    <property type="match status" value="1"/>
</dbReference>
<dbReference type="InterPro" id="IPR009050">
    <property type="entry name" value="Globin-like_sf"/>
</dbReference>
<dbReference type="InterPro" id="IPR012292">
    <property type="entry name" value="Globin/Proto"/>
</dbReference>
<dbReference type="InterPro" id="IPR019795">
    <property type="entry name" value="Globin_bac-like_CS"/>
</dbReference>
<dbReference type="InterPro" id="IPR001486">
    <property type="entry name" value="Hemoglobin_trunc"/>
</dbReference>
<dbReference type="InterPro" id="IPR016339">
    <property type="entry name" value="Hemoglobin_trunc_I"/>
</dbReference>
<dbReference type="Pfam" id="PF01152">
    <property type="entry name" value="Bac_globin"/>
    <property type="match status" value="1"/>
</dbReference>
<dbReference type="PIRSF" id="PIRSF002030">
    <property type="entry name" value="Globin_Protozoa/Cyanobacteria"/>
    <property type="match status" value="1"/>
</dbReference>
<dbReference type="SUPFAM" id="SSF46458">
    <property type="entry name" value="Globin-like"/>
    <property type="match status" value="1"/>
</dbReference>
<dbReference type="PROSITE" id="PS01213">
    <property type="entry name" value="GLOBIN_FAM_2"/>
    <property type="match status" value="1"/>
</dbReference>
<comment type="cofactor">
    <cofactor evidence="1">
        <name>heme</name>
        <dbReference type="ChEBI" id="CHEBI:30413"/>
    </cofactor>
    <text evidence="1">Binds 1 heme group per subunit.</text>
</comment>
<comment type="subunit">
    <text>Monomer.</text>
</comment>
<comment type="subcellular location">
    <subcellularLocation>
        <location>Membrane</location>
        <topology>Peripheral membrane protein</topology>
    </subcellularLocation>
</comment>
<comment type="similarity">
    <text evidence="3">Belongs to the truncated hemoglobin family. Group I subfamily.</text>
</comment>
<sequence length="118" mass="12794">MSTLYDNIGGQPAIEQVVDELHKRIATDSLLAPIFAGTDMAKQRNHLVAFLGQIFEGPKQYGGRPMDKTHAGLNLQQPHFDAIAKHLGEAMAVRGVSAEDTKAALDRVTNMKGAILNK</sequence>
<feature type="chain" id="PRO_0000162645" description="Group 1 truncated hemoglobin GlbN">
    <location>
        <begin position="1"/>
        <end position="118"/>
    </location>
</feature>
<feature type="binding site" description="proximal binding residue" evidence="2">
    <location>
        <position position="70"/>
    </location>
    <ligand>
        <name>heme</name>
        <dbReference type="ChEBI" id="CHEBI:30413"/>
    </ligand>
    <ligandPart>
        <name>Fe</name>
        <dbReference type="ChEBI" id="CHEBI:18248"/>
    </ligandPart>
</feature>
<accession>P52335</accession>